<reference key="1">
    <citation type="journal article" date="2005" name="Science">
        <title>The transcriptional landscape of the mammalian genome.</title>
        <authorList>
            <person name="Carninci P."/>
            <person name="Kasukawa T."/>
            <person name="Katayama S."/>
            <person name="Gough J."/>
            <person name="Frith M.C."/>
            <person name="Maeda N."/>
            <person name="Oyama R."/>
            <person name="Ravasi T."/>
            <person name="Lenhard B."/>
            <person name="Wells C."/>
            <person name="Kodzius R."/>
            <person name="Shimokawa K."/>
            <person name="Bajic V.B."/>
            <person name="Brenner S.E."/>
            <person name="Batalov S."/>
            <person name="Forrest A.R."/>
            <person name="Zavolan M."/>
            <person name="Davis M.J."/>
            <person name="Wilming L.G."/>
            <person name="Aidinis V."/>
            <person name="Allen J.E."/>
            <person name="Ambesi-Impiombato A."/>
            <person name="Apweiler R."/>
            <person name="Aturaliya R.N."/>
            <person name="Bailey T.L."/>
            <person name="Bansal M."/>
            <person name="Baxter L."/>
            <person name="Beisel K.W."/>
            <person name="Bersano T."/>
            <person name="Bono H."/>
            <person name="Chalk A.M."/>
            <person name="Chiu K.P."/>
            <person name="Choudhary V."/>
            <person name="Christoffels A."/>
            <person name="Clutterbuck D.R."/>
            <person name="Crowe M.L."/>
            <person name="Dalla E."/>
            <person name="Dalrymple B.P."/>
            <person name="de Bono B."/>
            <person name="Della Gatta G."/>
            <person name="di Bernardo D."/>
            <person name="Down T."/>
            <person name="Engstrom P."/>
            <person name="Fagiolini M."/>
            <person name="Faulkner G."/>
            <person name="Fletcher C.F."/>
            <person name="Fukushima T."/>
            <person name="Furuno M."/>
            <person name="Futaki S."/>
            <person name="Gariboldi M."/>
            <person name="Georgii-Hemming P."/>
            <person name="Gingeras T.R."/>
            <person name="Gojobori T."/>
            <person name="Green R.E."/>
            <person name="Gustincich S."/>
            <person name="Harbers M."/>
            <person name="Hayashi Y."/>
            <person name="Hensch T.K."/>
            <person name="Hirokawa N."/>
            <person name="Hill D."/>
            <person name="Huminiecki L."/>
            <person name="Iacono M."/>
            <person name="Ikeo K."/>
            <person name="Iwama A."/>
            <person name="Ishikawa T."/>
            <person name="Jakt M."/>
            <person name="Kanapin A."/>
            <person name="Katoh M."/>
            <person name="Kawasawa Y."/>
            <person name="Kelso J."/>
            <person name="Kitamura H."/>
            <person name="Kitano H."/>
            <person name="Kollias G."/>
            <person name="Krishnan S.P."/>
            <person name="Kruger A."/>
            <person name="Kummerfeld S.K."/>
            <person name="Kurochkin I.V."/>
            <person name="Lareau L.F."/>
            <person name="Lazarevic D."/>
            <person name="Lipovich L."/>
            <person name="Liu J."/>
            <person name="Liuni S."/>
            <person name="McWilliam S."/>
            <person name="Madan Babu M."/>
            <person name="Madera M."/>
            <person name="Marchionni L."/>
            <person name="Matsuda H."/>
            <person name="Matsuzawa S."/>
            <person name="Miki H."/>
            <person name="Mignone F."/>
            <person name="Miyake S."/>
            <person name="Morris K."/>
            <person name="Mottagui-Tabar S."/>
            <person name="Mulder N."/>
            <person name="Nakano N."/>
            <person name="Nakauchi H."/>
            <person name="Ng P."/>
            <person name="Nilsson R."/>
            <person name="Nishiguchi S."/>
            <person name="Nishikawa S."/>
            <person name="Nori F."/>
            <person name="Ohara O."/>
            <person name="Okazaki Y."/>
            <person name="Orlando V."/>
            <person name="Pang K.C."/>
            <person name="Pavan W.J."/>
            <person name="Pavesi G."/>
            <person name="Pesole G."/>
            <person name="Petrovsky N."/>
            <person name="Piazza S."/>
            <person name="Reed J."/>
            <person name="Reid J.F."/>
            <person name="Ring B.Z."/>
            <person name="Ringwald M."/>
            <person name="Rost B."/>
            <person name="Ruan Y."/>
            <person name="Salzberg S.L."/>
            <person name="Sandelin A."/>
            <person name="Schneider C."/>
            <person name="Schoenbach C."/>
            <person name="Sekiguchi K."/>
            <person name="Semple C.A."/>
            <person name="Seno S."/>
            <person name="Sessa L."/>
            <person name="Sheng Y."/>
            <person name="Shibata Y."/>
            <person name="Shimada H."/>
            <person name="Shimada K."/>
            <person name="Silva D."/>
            <person name="Sinclair B."/>
            <person name="Sperling S."/>
            <person name="Stupka E."/>
            <person name="Sugiura K."/>
            <person name="Sultana R."/>
            <person name="Takenaka Y."/>
            <person name="Taki K."/>
            <person name="Tammoja K."/>
            <person name="Tan S.L."/>
            <person name="Tang S."/>
            <person name="Taylor M.S."/>
            <person name="Tegner J."/>
            <person name="Teichmann S.A."/>
            <person name="Ueda H.R."/>
            <person name="van Nimwegen E."/>
            <person name="Verardo R."/>
            <person name="Wei C.L."/>
            <person name="Yagi K."/>
            <person name="Yamanishi H."/>
            <person name="Zabarovsky E."/>
            <person name="Zhu S."/>
            <person name="Zimmer A."/>
            <person name="Hide W."/>
            <person name="Bult C."/>
            <person name="Grimmond S.M."/>
            <person name="Teasdale R.D."/>
            <person name="Liu E.T."/>
            <person name="Brusic V."/>
            <person name="Quackenbush J."/>
            <person name="Wahlestedt C."/>
            <person name="Mattick J.S."/>
            <person name="Hume D.A."/>
            <person name="Kai C."/>
            <person name="Sasaki D."/>
            <person name="Tomaru Y."/>
            <person name="Fukuda S."/>
            <person name="Kanamori-Katayama M."/>
            <person name="Suzuki M."/>
            <person name="Aoki J."/>
            <person name="Arakawa T."/>
            <person name="Iida J."/>
            <person name="Imamura K."/>
            <person name="Itoh M."/>
            <person name="Kato T."/>
            <person name="Kawaji H."/>
            <person name="Kawagashira N."/>
            <person name="Kawashima T."/>
            <person name="Kojima M."/>
            <person name="Kondo S."/>
            <person name="Konno H."/>
            <person name="Nakano K."/>
            <person name="Ninomiya N."/>
            <person name="Nishio T."/>
            <person name="Okada M."/>
            <person name="Plessy C."/>
            <person name="Shibata K."/>
            <person name="Shiraki T."/>
            <person name="Suzuki S."/>
            <person name="Tagami M."/>
            <person name="Waki K."/>
            <person name="Watahiki A."/>
            <person name="Okamura-Oho Y."/>
            <person name="Suzuki H."/>
            <person name="Kawai J."/>
            <person name="Hayashizaki Y."/>
        </authorList>
    </citation>
    <scope>NUCLEOTIDE SEQUENCE [LARGE SCALE MRNA]</scope>
    <source>
        <strain>C57BL/6J</strain>
        <strain>NOD</strain>
        <tissue>Placenta</tissue>
        <tissue>Spleen</tissue>
        <tissue>Thymus</tissue>
    </source>
</reference>
<reference key="2">
    <citation type="journal article" date="2004" name="Genome Res.">
        <title>The status, quality, and expansion of the NIH full-length cDNA project: the Mammalian Gene Collection (MGC).</title>
        <authorList>
            <consortium name="The MGC Project Team"/>
        </authorList>
    </citation>
    <scope>NUCLEOTIDE SEQUENCE [LARGE SCALE MRNA]</scope>
    <source>
        <tissue>Placenta</tissue>
    </source>
</reference>
<reference key="3">
    <citation type="journal article" date="2010" name="Cell">
        <title>A tissue-specific atlas of mouse protein phosphorylation and expression.</title>
        <authorList>
            <person name="Huttlin E.L."/>
            <person name="Jedrychowski M.P."/>
            <person name="Elias J.E."/>
            <person name="Goswami T."/>
            <person name="Rad R."/>
            <person name="Beausoleil S.A."/>
            <person name="Villen J."/>
            <person name="Haas W."/>
            <person name="Sowa M.E."/>
            <person name="Gygi S.P."/>
        </authorList>
    </citation>
    <scope>IDENTIFICATION BY MASS SPECTROMETRY [LARGE SCALE ANALYSIS]</scope>
    <source>
        <tissue>Spleen</tissue>
        <tissue>Testis</tissue>
    </source>
</reference>
<reference key="4">
    <citation type="journal article" date="2013" name="Mol. Cell">
        <title>SIRT5-mediated lysine desuccinylation impacts diverse metabolic pathways.</title>
        <authorList>
            <person name="Park J."/>
            <person name="Chen Y."/>
            <person name="Tishkoff D.X."/>
            <person name="Peng C."/>
            <person name="Tan M."/>
            <person name="Dai L."/>
            <person name="Xie Z."/>
            <person name="Zhang Y."/>
            <person name="Zwaans B.M."/>
            <person name="Skinner M.E."/>
            <person name="Lombard D.B."/>
            <person name="Zhao Y."/>
        </authorList>
    </citation>
    <scope>ACETYLATION [LARGE SCALE ANALYSIS] AT LYS-26</scope>
    <scope>IDENTIFICATION BY MASS SPECTROMETRY [LARGE SCALE ANALYSIS]</scope>
    <source>
        <tissue>Embryonic fibroblast</tissue>
    </source>
</reference>
<sequence>MASSRASSTTTKTKAPDDLVAPVVKKPHIYYGSLEEKERERLAKGESGILGKEGLKAGIEAGNINITSGEVFEIEEHISERQAEVLAEFERRKRARQINVSTDDSEVKACLRALGEPITLFGEGPAERRERLRNILSVVGTDALKKTKKDDEKSKKSKEEYQQTWYHEGPNSLKVARLWIANYSLPRAMKRLEEARLHKEIPETTRTSQMQELHKSLRSLNNFCSQIGDDRPISYCHFSPNSKMLATACWSGLCKLWSVPDCSLLHTLRGHNTNVGAIVFHPKSTVSLDQKDVNLASCAADGSVKLWSLDSDEPVADIEGHTVRVARVMWHPSGRFLGTTCYDRSWRLWDLEAQEEILHQEGHSMGVYDIAFHQDGSLAGTGGLDAFGRVWDLRTGRCIMFLEGHLKEIYGINFSPNGYHIATGSGDNTCKVWDLRQRRCVYTIPAHQNLVTGVKFEPIHGDFLLTGAYDNTAKIWTHPGWSPLKTLAGHEGKVMGLDISSDGQLIATCSYDRTFKLWMAE</sequence>
<accession>Q9DAW6</accession>
<name>PRP4_MOUSE</name>
<organism>
    <name type="scientific">Mus musculus</name>
    <name type="common">Mouse</name>
    <dbReference type="NCBI Taxonomy" id="10090"/>
    <lineage>
        <taxon>Eukaryota</taxon>
        <taxon>Metazoa</taxon>
        <taxon>Chordata</taxon>
        <taxon>Craniata</taxon>
        <taxon>Vertebrata</taxon>
        <taxon>Euteleostomi</taxon>
        <taxon>Mammalia</taxon>
        <taxon>Eutheria</taxon>
        <taxon>Euarchontoglires</taxon>
        <taxon>Glires</taxon>
        <taxon>Rodentia</taxon>
        <taxon>Myomorpha</taxon>
        <taxon>Muroidea</taxon>
        <taxon>Muridae</taxon>
        <taxon>Murinae</taxon>
        <taxon>Mus</taxon>
        <taxon>Mus</taxon>
    </lineage>
</organism>
<feature type="chain" id="PRO_0000051150" description="U4/U6 small nuclear ribonucleoprotein Prp4">
    <location>
        <begin position="1"/>
        <end position="521"/>
    </location>
</feature>
<feature type="repeat" description="WD 1">
    <location>
        <begin position="228"/>
        <end position="267"/>
    </location>
</feature>
<feature type="repeat" description="WD 2">
    <location>
        <begin position="270"/>
        <end position="317"/>
    </location>
</feature>
<feature type="repeat" description="WD 3">
    <location>
        <begin position="320"/>
        <end position="359"/>
    </location>
</feature>
<feature type="repeat" description="WD 4">
    <location>
        <begin position="362"/>
        <end position="401"/>
    </location>
</feature>
<feature type="repeat" description="WD 5">
    <location>
        <begin position="404"/>
        <end position="443"/>
    </location>
</feature>
<feature type="repeat" description="WD 6">
    <location>
        <begin position="446"/>
        <end position="486"/>
    </location>
</feature>
<feature type="repeat" description="WD 7">
    <location>
        <begin position="489"/>
        <end position="521"/>
    </location>
</feature>
<feature type="modified residue" description="N6-acetyllysine" evidence="2">
    <location>
        <position position="26"/>
    </location>
</feature>
<protein>
    <recommendedName>
        <fullName>U4/U6 small nuclear ribonucleoprotein Prp4</fullName>
    </recommendedName>
    <alternativeName>
        <fullName>U4/U6 snRNP 60 kDa protein</fullName>
    </alternativeName>
    <alternativeName>
        <fullName>WD splicing factor Prp4</fullName>
    </alternativeName>
</protein>
<comment type="function">
    <text evidence="1">Plays a role in pre-mRNA splicing as component of the U4/U6-U5 tri-snRNP complex that is involved in spliceosome assembly, and as component of the precatalytic spliceosome (spliceosome B complex).</text>
</comment>
<comment type="subunit">
    <text evidence="1">Component of the precatalytic spliceosome (spliceosome B complex) (By similarity). Component of the U4/U6-U5 tri-snRNP complex, a building block of the precatalytic spliceosome (spliceosome B complex) (By similarity). The U4/U6-U5 tri-snRNP complex is composed of the U4, U6 and U5 snRNAs and at least PRPF3, PRPF4, PRPF6, PRPF8, PRPF31, SNRNP200, TXNL4A, SNRNP40, SNRPB, SNRPD1, SNRPD2, SNRPD3, SNRPE, SNRPF, SNRPG, DDX23, CD2BP2, PPIH, SNU13, EFTUD2, SART1 and USP39, plus LSM2, LSM3, LSM4, LSM5, LSM6, LSM7 and LSM8 (By similarity). Interacts directly with PRPF18, PPIH and PRPF3 (By similarity). Part of a heteromeric complex containing PPIH, PRPF3 and PRPF4 that is stable in the absence of RNA (By similarity). Interacts with ERCC6 (By similarity).</text>
</comment>
<comment type="subcellular location">
    <subcellularLocation>
        <location evidence="1">Nucleus</location>
    </subcellularLocation>
    <subcellularLocation>
        <location evidence="1">Nucleus speckle</location>
    </subcellularLocation>
</comment>
<keyword id="KW-0007">Acetylation</keyword>
<keyword id="KW-0507">mRNA processing</keyword>
<keyword id="KW-0508">mRNA splicing</keyword>
<keyword id="KW-0539">Nucleus</keyword>
<keyword id="KW-1185">Reference proteome</keyword>
<keyword id="KW-0677">Repeat</keyword>
<keyword id="KW-0747">Spliceosome</keyword>
<keyword id="KW-0853">WD repeat</keyword>
<dbReference type="EMBL" id="AK005464">
    <property type="protein sequence ID" value="BAB24055.1"/>
    <property type="molecule type" value="mRNA"/>
</dbReference>
<dbReference type="EMBL" id="AK089838">
    <property type="protein sequence ID" value="BAC40976.1"/>
    <property type="molecule type" value="mRNA"/>
</dbReference>
<dbReference type="EMBL" id="AK166912">
    <property type="protein sequence ID" value="BAE39112.1"/>
    <property type="molecule type" value="mRNA"/>
</dbReference>
<dbReference type="EMBL" id="AK167216">
    <property type="protein sequence ID" value="BAE39342.1"/>
    <property type="molecule type" value="mRNA"/>
</dbReference>
<dbReference type="EMBL" id="AK169532">
    <property type="protein sequence ID" value="BAE41214.1"/>
    <property type="molecule type" value="mRNA"/>
</dbReference>
<dbReference type="EMBL" id="BC106089">
    <property type="protein sequence ID" value="AAI06090.1"/>
    <property type="molecule type" value="mRNA"/>
</dbReference>
<dbReference type="CCDS" id="CCDS18239.1"/>
<dbReference type="RefSeq" id="NP_081573.1">
    <property type="nucleotide sequence ID" value="NM_027297.3"/>
</dbReference>
<dbReference type="SMR" id="Q9DAW6"/>
<dbReference type="BioGRID" id="213838">
    <property type="interactions" value="14"/>
</dbReference>
<dbReference type="FunCoup" id="Q9DAW6">
    <property type="interactions" value="4192"/>
</dbReference>
<dbReference type="IntAct" id="Q9DAW6">
    <property type="interactions" value="1"/>
</dbReference>
<dbReference type="MINT" id="Q9DAW6"/>
<dbReference type="STRING" id="10090.ENSMUSP00000081572"/>
<dbReference type="GlyGen" id="Q9DAW6">
    <property type="glycosylation" value="1 site, 1 O-linked glycan (1 site)"/>
</dbReference>
<dbReference type="iPTMnet" id="Q9DAW6"/>
<dbReference type="PhosphoSitePlus" id="Q9DAW6"/>
<dbReference type="SwissPalm" id="Q9DAW6"/>
<dbReference type="jPOST" id="Q9DAW6"/>
<dbReference type="PaxDb" id="10090-ENSMUSP00000081572"/>
<dbReference type="ProteomicsDB" id="291792"/>
<dbReference type="Pumba" id="Q9DAW6"/>
<dbReference type="Antibodypedia" id="15276">
    <property type="antibodies" value="139 antibodies from 25 providers"/>
</dbReference>
<dbReference type="DNASU" id="70052"/>
<dbReference type="Ensembl" id="ENSMUST00000084524.4">
    <property type="protein sequence ID" value="ENSMUSP00000081572.4"/>
    <property type="gene ID" value="ENSMUSG00000066148.4"/>
</dbReference>
<dbReference type="GeneID" id="70052"/>
<dbReference type="KEGG" id="mmu:70052"/>
<dbReference type="UCSC" id="uc008ter.1">
    <property type="organism name" value="mouse"/>
</dbReference>
<dbReference type="AGR" id="MGI:1917302"/>
<dbReference type="CTD" id="9128"/>
<dbReference type="MGI" id="MGI:1917302">
    <property type="gene designation" value="Prpf4"/>
</dbReference>
<dbReference type="VEuPathDB" id="HostDB:ENSMUSG00000066148"/>
<dbReference type="eggNOG" id="KOG0272">
    <property type="taxonomic scope" value="Eukaryota"/>
</dbReference>
<dbReference type="GeneTree" id="ENSGT00940000156006"/>
<dbReference type="HOGENOM" id="CLU_000288_57_20_1"/>
<dbReference type="InParanoid" id="Q9DAW6"/>
<dbReference type="OMA" id="LNEPICY"/>
<dbReference type="OrthoDB" id="540662at2759"/>
<dbReference type="PhylomeDB" id="Q9DAW6"/>
<dbReference type="TreeFam" id="TF314922"/>
<dbReference type="Reactome" id="R-MMU-72163">
    <property type="pathway name" value="mRNA Splicing - Major Pathway"/>
</dbReference>
<dbReference type="BioGRID-ORCS" id="70052">
    <property type="hits" value="28 hits in 79 CRISPR screens"/>
</dbReference>
<dbReference type="ChiTaRS" id="Prpf4">
    <property type="organism name" value="mouse"/>
</dbReference>
<dbReference type="PRO" id="PR:Q9DAW6"/>
<dbReference type="Proteomes" id="UP000000589">
    <property type="component" value="Chromosome 4"/>
</dbReference>
<dbReference type="RNAct" id="Q9DAW6">
    <property type="molecule type" value="protein"/>
</dbReference>
<dbReference type="Bgee" id="ENSMUSG00000066148">
    <property type="expression patterns" value="Expressed in manus and 216 other cell types or tissues"/>
</dbReference>
<dbReference type="ExpressionAtlas" id="Q9DAW6">
    <property type="expression patterns" value="baseline and differential"/>
</dbReference>
<dbReference type="GO" id="GO:0015030">
    <property type="term" value="C:Cajal body"/>
    <property type="evidence" value="ECO:0007669"/>
    <property type="project" value="Ensembl"/>
</dbReference>
<dbReference type="GO" id="GO:0016607">
    <property type="term" value="C:nuclear speck"/>
    <property type="evidence" value="ECO:0000250"/>
    <property type="project" value="UniProtKB"/>
</dbReference>
<dbReference type="GO" id="GO:0097525">
    <property type="term" value="C:spliceosomal snRNP complex"/>
    <property type="evidence" value="ECO:0000250"/>
    <property type="project" value="UniProtKB"/>
</dbReference>
<dbReference type="GO" id="GO:0071005">
    <property type="term" value="C:U2-type precatalytic spliceosome"/>
    <property type="evidence" value="ECO:0007669"/>
    <property type="project" value="Ensembl"/>
</dbReference>
<dbReference type="GO" id="GO:0071001">
    <property type="term" value="C:U4/U6 snRNP"/>
    <property type="evidence" value="ECO:0000250"/>
    <property type="project" value="UniProtKB"/>
</dbReference>
<dbReference type="GO" id="GO:0046540">
    <property type="term" value="C:U4/U6 x U5 tri-snRNP complex"/>
    <property type="evidence" value="ECO:0000266"/>
    <property type="project" value="MGI"/>
</dbReference>
<dbReference type="GO" id="GO:0000398">
    <property type="term" value="P:mRNA splicing, via spliceosome"/>
    <property type="evidence" value="ECO:0000266"/>
    <property type="project" value="MGI"/>
</dbReference>
<dbReference type="CDD" id="cd00200">
    <property type="entry name" value="WD40"/>
    <property type="match status" value="1"/>
</dbReference>
<dbReference type="FunFam" id="2.130.10.10:FF:000147">
    <property type="entry name" value="U4/U6 small nuclear ribonucleoprotein Prp4"/>
    <property type="match status" value="1"/>
</dbReference>
<dbReference type="FunFam" id="2.130.10.10:FF:000356">
    <property type="entry name" value="U4/U6 small nuclear ribonucleoprotein Prp4"/>
    <property type="match status" value="1"/>
</dbReference>
<dbReference type="FunFam" id="4.10.280.110:FF:000002">
    <property type="entry name" value="U4/U6 small nuclear ribonucleoprotein Prp4"/>
    <property type="match status" value="1"/>
</dbReference>
<dbReference type="FunFam" id="2.130.10.10:FF:000113">
    <property type="entry name" value="U4/U6 small nuclear ribonucleoprotein Prp4 isoform X1"/>
    <property type="match status" value="1"/>
</dbReference>
<dbReference type="Gene3D" id="4.10.280.110">
    <property type="entry name" value="Pre-mRNA processing factor 4 domain"/>
    <property type="match status" value="1"/>
</dbReference>
<dbReference type="Gene3D" id="2.130.10.10">
    <property type="entry name" value="YVTN repeat-like/Quinoprotein amine dehydrogenase"/>
    <property type="match status" value="3"/>
</dbReference>
<dbReference type="InterPro" id="IPR020472">
    <property type="entry name" value="G-protein_beta_WD-40_rep"/>
</dbReference>
<dbReference type="InterPro" id="IPR014906">
    <property type="entry name" value="PRP4-like"/>
</dbReference>
<dbReference type="InterPro" id="IPR036285">
    <property type="entry name" value="PRP4-like_sf"/>
</dbReference>
<dbReference type="InterPro" id="IPR015943">
    <property type="entry name" value="WD40/YVTN_repeat-like_dom_sf"/>
</dbReference>
<dbReference type="InterPro" id="IPR019775">
    <property type="entry name" value="WD40_repeat_CS"/>
</dbReference>
<dbReference type="InterPro" id="IPR036322">
    <property type="entry name" value="WD40_repeat_dom_sf"/>
</dbReference>
<dbReference type="InterPro" id="IPR001680">
    <property type="entry name" value="WD40_rpt"/>
</dbReference>
<dbReference type="PANTHER" id="PTHR19846:SF5">
    <property type="entry name" value="U4_U6 SMALL NUCLEAR RIBONUCLEOPROTEIN PRP4"/>
    <property type="match status" value="1"/>
</dbReference>
<dbReference type="PANTHER" id="PTHR19846">
    <property type="entry name" value="WD40 REPEAT PROTEIN"/>
    <property type="match status" value="1"/>
</dbReference>
<dbReference type="Pfam" id="PF08799">
    <property type="entry name" value="PRP4"/>
    <property type="match status" value="1"/>
</dbReference>
<dbReference type="Pfam" id="PF00400">
    <property type="entry name" value="WD40"/>
    <property type="match status" value="7"/>
</dbReference>
<dbReference type="PRINTS" id="PR00320">
    <property type="entry name" value="GPROTEINBRPT"/>
</dbReference>
<dbReference type="SMART" id="SM00500">
    <property type="entry name" value="SFM"/>
    <property type="match status" value="1"/>
</dbReference>
<dbReference type="SMART" id="SM00320">
    <property type="entry name" value="WD40"/>
    <property type="match status" value="7"/>
</dbReference>
<dbReference type="SUPFAM" id="SSF158230">
    <property type="entry name" value="PRP4-like"/>
    <property type="match status" value="1"/>
</dbReference>
<dbReference type="SUPFAM" id="SSF50978">
    <property type="entry name" value="WD40 repeat-like"/>
    <property type="match status" value="1"/>
</dbReference>
<dbReference type="PROSITE" id="PS00678">
    <property type="entry name" value="WD_REPEATS_1"/>
    <property type="match status" value="2"/>
</dbReference>
<dbReference type="PROSITE" id="PS50082">
    <property type="entry name" value="WD_REPEATS_2"/>
    <property type="match status" value="6"/>
</dbReference>
<dbReference type="PROSITE" id="PS50294">
    <property type="entry name" value="WD_REPEATS_REGION"/>
    <property type="match status" value="1"/>
</dbReference>
<gene>
    <name type="primary">Prpf4</name>
</gene>
<evidence type="ECO:0000250" key="1">
    <source>
        <dbReference type="UniProtKB" id="O43172"/>
    </source>
</evidence>
<evidence type="ECO:0007744" key="2">
    <source>
    </source>
</evidence>
<proteinExistence type="evidence at protein level"/>